<keyword id="KW-0001">2Fe-2S</keyword>
<keyword id="KW-0408">Iron</keyword>
<keyword id="KW-0411">Iron-sulfur</keyword>
<keyword id="KW-0479">Metal-binding</keyword>
<keyword id="KW-0676">Redox-active center</keyword>
<keyword id="KW-1185">Reference proteome</keyword>
<sequence length="89" mass="9843">MLYMKGTPKMPQCGFSARAVQCIEACGVDFAYVDILANPDIRQVLPQFSDWPTFPQLYVKGELIGGSDIIAEMFQQGELEPMLRDAVAA</sequence>
<accession>Q48833</accession>
<accession>Q5ZRB6</accession>
<protein>
    <recommendedName>
        <fullName>Probable monothiol glutaredoxin GrlA</fullName>
    </recommendedName>
</protein>
<reference key="1">
    <citation type="submission" date="1995-08" db="EMBL/GenBank/DDBJ databases">
        <authorList>
            <person name="Rankin S."/>
            <person name="Isberg R.R."/>
        </authorList>
    </citation>
    <scope>NUCLEOTIDE SEQUENCE [GENOMIC DNA]</scope>
</reference>
<reference key="2">
    <citation type="journal article" date="2004" name="Science">
        <title>The genomic sequence of the accidental pathogen Legionella pneumophila.</title>
        <authorList>
            <person name="Chien M."/>
            <person name="Morozova I."/>
            <person name="Shi S."/>
            <person name="Sheng H."/>
            <person name="Chen J."/>
            <person name="Gomez S.M."/>
            <person name="Asamani G."/>
            <person name="Hill K."/>
            <person name="Nuara J."/>
            <person name="Feder M."/>
            <person name="Rineer J."/>
            <person name="Greenberg J.J."/>
            <person name="Steshenko V."/>
            <person name="Park S.H."/>
            <person name="Zhao B."/>
            <person name="Teplitskaya E."/>
            <person name="Edwards J.R."/>
            <person name="Pampou S."/>
            <person name="Georghiou A."/>
            <person name="Chou I.-C."/>
            <person name="Iannuccilli W."/>
            <person name="Ulz M.E."/>
            <person name="Kim D.H."/>
            <person name="Geringer-Sameth A."/>
            <person name="Goldsberry C."/>
            <person name="Morozov P."/>
            <person name="Fischer S.G."/>
            <person name="Segal G."/>
            <person name="Qu X."/>
            <person name="Rzhetsky A."/>
            <person name="Zhang P."/>
            <person name="Cayanis E."/>
            <person name="De Jong P.J."/>
            <person name="Ju J."/>
            <person name="Kalachikov S."/>
            <person name="Shuman H.A."/>
            <person name="Russo J.J."/>
        </authorList>
    </citation>
    <scope>NUCLEOTIDE SEQUENCE [LARGE SCALE GENOMIC DNA]</scope>
    <source>
        <strain>Philadelphia 1 / ATCC 33152 / DSM 7513</strain>
    </source>
</reference>
<gene>
    <name type="primary">grlA</name>
    <name type="ordered locus">lpg2966</name>
</gene>
<organism>
    <name type="scientific">Legionella pneumophila subsp. pneumophila (strain Philadelphia 1 / ATCC 33152 / DSM 7513)</name>
    <dbReference type="NCBI Taxonomy" id="272624"/>
    <lineage>
        <taxon>Bacteria</taxon>
        <taxon>Pseudomonadati</taxon>
        <taxon>Pseudomonadota</taxon>
        <taxon>Gammaproteobacteria</taxon>
        <taxon>Legionellales</taxon>
        <taxon>Legionellaceae</taxon>
        <taxon>Legionella</taxon>
    </lineage>
</organism>
<comment type="similarity">
    <text evidence="3">Belongs to the glutaredoxin family. Monothiol subfamily.</text>
</comment>
<feature type="chain" id="PRO_0000102263" description="Probable monothiol glutaredoxin GrlA">
    <location>
        <begin position="1"/>
        <end position="89"/>
    </location>
</feature>
<feature type="domain" description="Glutaredoxin" evidence="2">
    <location>
        <begin position="1"/>
        <end position="89"/>
    </location>
</feature>
<feature type="binding site" evidence="1">
    <location>
        <position position="5"/>
    </location>
    <ligand>
        <name>glutathione</name>
        <dbReference type="ChEBI" id="CHEBI:57925"/>
    </ligand>
</feature>
<feature type="binding site" evidence="1">
    <location>
        <position position="13"/>
    </location>
    <ligand>
        <name>[2Fe-2S] cluster</name>
        <dbReference type="ChEBI" id="CHEBI:190135"/>
        <note>ligand shared between dimeric partners</note>
    </ligand>
</feature>
<feature type="binding site" evidence="1">
    <location>
        <position position="42"/>
    </location>
    <ligand>
        <name>glutathione</name>
        <dbReference type="ChEBI" id="CHEBI:57925"/>
    </ligand>
</feature>
<feature type="binding site" evidence="1">
    <location>
        <position position="54"/>
    </location>
    <ligand>
        <name>glutathione</name>
        <dbReference type="ChEBI" id="CHEBI:57925"/>
    </ligand>
</feature>
<feature type="binding site" evidence="1">
    <location>
        <begin position="67"/>
        <end position="68"/>
    </location>
    <ligand>
        <name>glutathione</name>
        <dbReference type="ChEBI" id="CHEBI:57925"/>
    </ligand>
</feature>
<evidence type="ECO:0000250" key="1"/>
<evidence type="ECO:0000255" key="2">
    <source>
        <dbReference type="PROSITE-ProRule" id="PRU00686"/>
    </source>
</evidence>
<evidence type="ECO:0000305" key="3"/>
<proteinExistence type="inferred from homology"/>
<dbReference type="EMBL" id="L46863">
    <property type="protein sequence ID" value="AAA74932.1"/>
    <property type="molecule type" value="Genomic_DNA"/>
</dbReference>
<dbReference type="EMBL" id="AE017354">
    <property type="protein sequence ID" value="AAU29012.1"/>
    <property type="molecule type" value="Genomic_DNA"/>
</dbReference>
<dbReference type="RefSeq" id="YP_096959.1">
    <property type="nucleotide sequence ID" value="NC_002942.5"/>
</dbReference>
<dbReference type="SMR" id="Q48833"/>
<dbReference type="STRING" id="272624.lpg2966"/>
<dbReference type="PaxDb" id="272624-lpg2966"/>
<dbReference type="KEGG" id="lpn:lpg2966"/>
<dbReference type="PATRIC" id="fig|272624.6.peg.3171"/>
<dbReference type="eggNOG" id="COG0278">
    <property type="taxonomic scope" value="Bacteria"/>
</dbReference>
<dbReference type="HOGENOM" id="CLU_026126_2_1_6"/>
<dbReference type="OrthoDB" id="9804115at2"/>
<dbReference type="Proteomes" id="UP000000609">
    <property type="component" value="Chromosome"/>
</dbReference>
<dbReference type="GO" id="GO:0051537">
    <property type="term" value="F:2 iron, 2 sulfur cluster binding"/>
    <property type="evidence" value="ECO:0007669"/>
    <property type="project" value="UniProtKB-KW"/>
</dbReference>
<dbReference type="GO" id="GO:0015036">
    <property type="term" value="F:disulfide oxidoreductase activity"/>
    <property type="evidence" value="ECO:0007669"/>
    <property type="project" value="InterPro"/>
</dbReference>
<dbReference type="GO" id="GO:0046872">
    <property type="term" value="F:metal ion binding"/>
    <property type="evidence" value="ECO:0007669"/>
    <property type="project" value="UniProtKB-KW"/>
</dbReference>
<dbReference type="CDD" id="cd03028">
    <property type="entry name" value="GRX_PICOT_like"/>
    <property type="match status" value="1"/>
</dbReference>
<dbReference type="Gene3D" id="3.40.30.10">
    <property type="entry name" value="Glutaredoxin"/>
    <property type="match status" value="1"/>
</dbReference>
<dbReference type="InterPro" id="IPR002109">
    <property type="entry name" value="Glutaredoxin"/>
</dbReference>
<dbReference type="InterPro" id="IPR033658">
    <property type="entry name" value="GRX_PICOT-like"/>
</dbReference>
<dbReference type="InterPro" id="IPR014434">
    <property type="entry name" value="Monothiol_GRX"/>
</dbReference>
<dbReference type="InterPro" id="IPR004480">
    <property type="entry name" value="Monothiol_GRX-rel"/>
</dbReference>
<dbReference type="InterPro" id="IPR036249">
    <property type="entry name" value="Thioredoxin-like_sf"/>
</dbReference>
<dbReference type="NCBIfam" id="TIGR00365">
    <property type="entry name" value="Grx4 family monothiol glutaredoxin"/>
    <property type="match status" value="1"/>
</dbReference>
<dbReference type="PANTHER" id="PTHR10293">
    <property type="entry name" value="GLUTAREDOXIN FAMILY MEMBER"/>
    <property type="match status" value="1"/>
</dbReference>
<dbReference type="PANTHER" id="PTHR10293:SF72">
    <property type="entry name" value="MONOTHIOL GLUTAREDOXIN-S14, CHLOROPLASTIC"/>
    <property type="match status" value="1"/>
</dbReference>
<dbReference type="Pfam" id="PF00462">
    <property type="entry name" value="Glutaredoxin"/>
    <property type="match status" value="1"/>
</dbReference>
<dbReference type="PIRSF" id="PIRSF005894">
    <property type="entry name" value="Monothiol_GRX"/>
    <property type="match status" value="1"/>
</dbReference>
<dbReference type="SUPFAM" id="SSF52833">
    <property type="entry name" value="Thioredoxin-like"/>
    <property type="match status" value="1"/>
</dbReference>
<dbReference type="PROSITE" id="PS51354">
    <property type="entry name" value="GLUTAREDOXIN_2"/>
    <property type="match status" value="1"/>
</dbReference>
<name>GLRXA_LEGPH</name>